<evidence type="ECO:0000250" key="1"/>
<evidence type="ECO:0000255" key="2"/>
<evidence type="ECO:0000269" key="3">
    <source>
    </source>
</evidence>
<evidence type="ECO:0000269" key="4">
    <source>
    </source>
</evidence>
<evidence type="ECO:0000303" key="5">
    <source>
    </source>
</evidence>
<evidence type="ECO:0000305" key="6"/>
<evidence type="ECO:0007829" key="7">
    <source>
        <dbReference type="PDB" id="8OQY"/>
    </source>
</evidence>
<evidence type="ECO:0007829" key="8">
    <source>
        <dbReference type="PDB" id="8OQZ"/>
    </source>
</evidence>
<organism>
    <name type="scientific">Homo sapiens</name>
    <name type="common">Human</name>
    <dbReference type="NCBI Taxonomy" id="9606"/>
    <lineage>
        <taxon>Eukaryota</taxon>
        <taxon>Metazoa</taxon>
        <taxon>Chordata</taxon>
        <taxon>Craniata</taxon>
        <taxon>Vertebrata</taxon>
        <taxon>Euteleostomi</taxon>
        <taxon>Mammalia</taxon>
        <taxon>Eutheria</taxon>
        <taxon>Euarchontoglires</taxon>
        <taxon>Primates</taxon>
        <taxon>Haplorrhini</taxon>
        <taxon>Catarrhini</taxon>
        <taxon>Hominidae</taxon>
        <taxon>Homo</taxon>
    </lineage>
</organism>
<feature type="chain" id="PRO_0000221052" description="Gamma-secretase subunit APH-1B">
    <location>
        <begin position="1"/>
        <end position="257"/>
    </location>
</feature>
<feature type="transmembrane region" description="Helical; Name=1" evidence="2">
    <location>
        <begin position="5"/>
        <end position="25"/>
    </location>
</feature>
<feature type="transmembrane region" description="Helical; Name=2" evidence="2">
    <location>
        <begin position="32"/>
        <end position="52"/>
    </location>
</feature>
<feature type="transmembrane region" description="Helical; Name=3" evidence="2">
    <location>
        <begin position="71"/>
        <end position="91"/>
    </location>
</feature>
<feature type="transmembrane region" description="Helical; Name=4" evidence="2">
    <location>
        <begin position="115"/>
        <end position="135"/>
    </location>
</feature>
<feature type="transmembrane region" description="Helical; Name=5" evidence="2">
    <location>
        <begin position="158"/>
        <end position="178"/>
    </location>
</feature>
<feature type="transmembrane region" description="Helical; Name=6" evidence="2">
    <location>
        <begin position="186"/>
        <end position="206"/>
    </location>
</feature>
<feature type="transmembrane region" description="Helical; Name=7" evidence="2">
    <location>
        <begin position="213"/>
        <end position="233"/>
    </location>
</feature>
<feature type="splice variant" id="VSP_042945" description="In isoform 2." evidence="5">
    <location>
        <begin position="119"/>
        <end position="159"/>
    </location>
</feature>
<feature type="sequence variant" id="VAR_048315" description="In dbSNP:rs1047552.">
    <original>F</original>
    <variation>L</variation>
    <location>
        <position position="217"/>
    </location>
</feature>
<feature type="sequence conflict" description="In Ref. 4; AAQ89061." evidence="6" ref="4">
    <original>T</original>
    <variation>I</variation>
    <location>
        <position position="27"/>
    </location>
</feature>
<feature type="sequence conflict" description="In Ref. 1; AAN63817 and 3; CAB66606." evidence="6" ref="1 3">
    <original>Q</original>
    <variation>R</variation>
    <location>
        <position position="83"/>
    </location>
</feature>
<feature type="helix" evidence="7">
    <location>
        <begin position="3"/>
        <end position="24"/>
    </location>
</feature>
<feature type="helix" evidence="7">
    <location>
        <begin position="25"/>
        <end position="27"/>
    </location>
</feature>
<feature type="helix" evidence="7">
    <location>
        <begin position="29"/>
        <end position="60"/>
    </location>
</feature>
<feature type="helix" evidence="7">
    <location>
        <begin position="65"/>
        <end position="99"/>
    </location>
</feature>
<feature type="helix" evidence="7">
    <location>
        <begin position="113"/>
        <end position="137"/>
    </location>
</feature>
<feature type="helix" evidence="7">
    <location>
        <begin position="138"/>
        <end position="140"/>
    </location>
</feature>
<feature type="strand" evidence="7">
    <location>
        <begin position="141"/>
        <end position="143"/>
    </location>
</feature>
<feature type="strand" evidence="8">
    <location>
        <begin position="148"/>
        <end position="150"/>
    </location>
</feature>
<feature type="helix" evidence="7">
    <location>
        <begin position="155"/>
        <end position="182"/>
    </location>
</feature>
<feature type="helix" evidence="7">
    <location>
        <begin position="186"/>
        <end position="205"/>
    </location>
</feature>
<feature type="helix" evidence="7">
    <location>
        <begin position="209"/>
        <end position="230"/>
    </location>
</feature>
<feature type="helix" evidence="8">
    <location>
        <begin position="235"/>
        <end position="240"/>
    </location>
</feature>
<protein>
    <recommendedName>
        <fullName>Gamma-secretase subunit APH-1B</fullName>
        <shortName>APH-1b</shortName>
    </recommendedName>
    <alternativeName>
        <fullName>Aph-1beta</fullName>
    </alternativeName>
    <alternativeName>
        <fullName>Presenilin-stabilization factor-like</fullName>
    </alternativeName>
</protein>
<accession>Q8WW43</accession>
<accession>A8K589</accession>
<accession>Q564N3</accession>
<accession>Q6UWQ1</accession>
<accession>Q9H0S0</accession>
<dbReference type="EMBL" id="AF508794">
    <property type="protein sequence ID" value="AAN63817.1"/>
    <property type="molecule type" value="mRNA"/>
</dbReference>
<dbReference type="EMBL" id="AB189172">
    <property type="protein sequence ID" value="BAD95573.1"/>
    <property type="molecule type" value="mRNA"/>
</dbReference>
<dbReference type="EMBL" id="AL136671">
    <property type="protein sequence ID" value="CAB66606.1"/>
    <property type="molecule type" value="mRNA"/>
</dbReference>
<dbReference type="EMBL" id="AY358698">
    <property type="protein sequence ID" value="AAQ89061.1"/>
    <property type="molecule type" value="mRNA"/>
</dbReference>
<dbReference type="EMBL" id="AK291204">
    <property type="protein sequence ID" value="BAF83893.1"/>
    <property type="molecule type" value="mRNA"/>
</dbReference>
<dbReference type="EMBL" id="AC016207">
    <property type="status" value="NOT_ANNOTATED_CDS"/>
    <property type="molecule type" value="Genomic_DNA"/>
</dbReference>
<dbReference type="EMBL" id="CH471082">
    <property type="protein sequence ID" value="EAW77645.1"/>
    <property type="molecule type" value="Genomic_DNA"/>
</dbReference>
<dbReference type="EMBL" id="BC020905">
    <property type="protein sequence ID" value="AAH20905.1"/>
    <property type="molecule type" value="mRNA"/>
</dbReference>
<dbReference type="CCDS" id="CCDS10184.1">
    <molecule id="Q8WW43-1"/>
</dbReference>
<dbReference type="CCDS" id="CCDS45276.1">
    <molecule id="Q8WW43-2"/>
</dbReference>
<dbReference type="RefSeq" id="NP_001139118.1">
    <molecule id="Q8WW43-2"/>
    <property type="nucleotide sequence ID" value="NM_001145646.2"/>
</dbReference>
<dbReference type="RefSeq" id="NP_112591.2">
    <molecule id="Q8WW43-1"/>
    <property type="nucleotide sequence ID" value="NM_031301.4"/>
</dbReference>
<dbReference type="PDB" id="8OQY">
    <property type="method" value="EM"/>
    <property type="resolution" value="3.30 A"/>
    <property type="chains" value="C=1-257"/>
</dbReference>
<dbReference type="PDB" id="8OQZ">
    <property type="method" value="EM"/>
    <property type="resolution" value="3.40 A"/>
    <property type="chains" value="C=1-257"/>
</dbReference>
<dbReference type="PDBsum" id="8OQY"/>
<dbReference type="PDBsum" id="8OQZ"/>
<dbReference type="EMDB" id="EMD-17112"/>
<dbReference type="EMDB" id="EMD-17113"/>
<dbReference type="SMR" id="Q8WW43"/>
<dbReference type="BioGRID" id="123659">
    <property type="interactions" value="9"/>
</dbReference>
<dbReference type="ComplexPortal" id="CPX-4232">
    <property type="entry name" value="Gamma-secretase complex, APH1B-PSEN2 variant"/>
</dbReference>
<dbReference type="ComplexPortal" id="CPX-4233">
    <property type="entry name" value="Gamma-secretase complex, APH1B-PSEN1 variant"/>
</dbReference>
<dbReference type="CORUM" id="Q8WW43"/>
<dbReference type="FunCoup" id="Q8WW43">
    <property type="interactions" value="873"/>
</dbReference>
<dbReference type="IntAct" id="Q8WW43">
    <property type="interactions" value="7"/>
</dbReference>
<dbReference type="MINT" id="Q8WW43"/>
<dbReference type="STRING" id="9606.ENSP00000261879"/>
<dbReference type="BindingDB" id="Q8WW43"/>
<dbReference type="ChEMBL" id="CHEMBL2094135"/>
<dbReference type="DrugBank" id="DB11893">
    <property type="generic name" value="Avagacestat"/>
</dbReference>
<dbReference type="DrugBank" id="DB12263">
    <property type="generic name" value="Begacestat"/>
</dbReference>
<dbReference type="DrugBank" id="DB05171">
    <property type="generic name" value="E-2012"/>
</dbReference>
<dbReference type="DrugBank" id="DB16159">
    <property type="generic name" value="Esflurbiprofen"/>
</dbReference>
<dbReference type="DrugBank" id="DB12819">
    <property type="generic name" value="GSI-136"/>
</dbReference>
<dbReference type="DrugBank" id="DB16825">
    <property type="generic name" value="Itanapraced"/>
</dbReference>
<dbReference type="DrugBank" id="DB12852">
    <property type="generic name" value="MK-0752"/>
</dbReference>
<dbReference type="DrugBank" id="DB12005">
    <property type="generic name" value="Nirogacestat"/>
</dbReference>
<dbReference type="DrugBank" id="DB11870">
    <property type="generic name" value="RG-4733"/>
</dbReference>
<dbReference type="DrugBank" id="DB12463">
    <property type="generic name" value="Semagacestat"/>
</dbReference>
<dbReference type="DrugBank" id="DB05289">
    <property type="generic name" value="Tarenflurbil"/>
</dbReference>
<dbReference type="TCDB" id="1.A.121.1.1">
    <property type="family name" value="the anterior pharynx-defective water channel (aph-wc) family"/>
</dbReference>
<dbReference type="iPTMnet" id="Q8WW43"/>
<dbReference type="PhosphoSitePlus" id="Q8WW43"/>
<dbReference type="SwissPalm" id="Q8WW43"/>
<dbReference type="BioMuta" id="APH1B"/>
<dbReference type="DMDM" id="61252592"/>
<dbReference type="jPOST" id="Q8WW43"/>
<dbReference type="MassIVE" id="Q8WW43"/>
<dbReference type="PaxDb" id="9606-ENSP00000261879"/>
<dbReference type="PeptideAtlas" id="Q8WW43"/>
<dbReference type="ProteomicsDB" id="74860">
    <molecule id="Q8WW43-1"/>
</dbReference>
<dbReference type="ProteomicsDB" id="74861">
    <molecule id="Q8WW43-2"/>
</dbReference>
<dbReference type="Antibodypedia" id="56277">
    <property type="antibodies" value="89 antibodies from 19 providers"/>
</dbReference>
<dbReference type="DNASU" id="83464"/>
<dbReference type="Ensembl" id="ENST00000261879.10">
    <molecule id="Q8WW43-1"/>
    <property type="protein sequence ID" value="ENSP00000261879.5"/>
    <property type="gene ID" value="ENSG00000138613.14"/>
</dbReference>
<dbReference type="Ensembl" id="ENST00000380343.8">
    <molecule id="Q8WW43-2"/>
    <property type="protein sequence ID" value="ENSP00000369700.4"/>
    <property type="gene ID" value="ENSG00000138613.14"/>
</dbReference>
<dbReference type="GeneID" id="83464"/>
<dbReference type="KEGG" id="hsa:83464"/>
<dbReference type="MANE-Select" id="ENST00000261879.10">
    <property type="protein sequence ID" value="ENSP00000261879.5"/>
    <property type="RefSeq nucleotide sequence ID" value="NM_031301.4"/>
    <property type="RefSeq protein sequence ID" value="NP_112591.2"/>
</dbReference>
<dbReference type="UCSC" id="uc002ama.4">
    <molecule id="Q8WW43-1"/>
    <property type="organism name" value="human"/>
</dbReference>
<dbReference type="AGR" id="HGNC:24080"/>
<dbReference type="CTD" id="83464"/>
<dbReference type="DisGeNET" id="83464"/>
<dbReference type="GeneCards" id="APH1B"/>
<dbReference type="HGNC" id="HGNC:24080">
    <property type="gene designation" value="APH1B"/>
</dbReference>
<dbReference type="HPA" id="ENSG00000138613">
    <property type="expression patterns" value="Tissue enriched (testis)"/>
</dbReference>
<dbReference type="MIM" id="607630">
    <property type="type" value="gene"/>
</dbReference>
<dbReference type="neXtProt" id="NX_Q8WW43"/>
<dbReference type="NIAGADS" id="ENSG00000138613"/>
<dbReference type="OpenTargets" id="ENSG00000138613"/>
<dbReference type="PharmGKB" id="PA142672600"/>
<dbReference type="VEuPathDB" id="HostDB:ENSG00000138613"/>
<dbReference type="eggNOG" id="KOG3972">
    <property type="taxonomic scope" value="Eukaryota"/>
</dbReference>
<dbReference type="GeneTree" id="ENSGT00390000002049"/>
<dbReference type="HOGENOM" id="CLU_086389_0_0_1"/>
<dbReference type="InParanoid" id="Q8WW43"/>
<dbReference type="OMA" id="PTYIIMF"/>
<dbReference type="OrthoDB" id="6507463at2759"/>
<dbReference type="PAN-GO" id="Q8WW43">
    <property type="GO annotations" value="7 GO annotations based on evolutionary models"/>
</dbReference>
<dbReference type="PhylomeDB" id="Q8WW43"/>
<dbReference type="TreeFam" id="TF314362"/>
<dbReference type="PathwayCommons" id="Q8WW43"/>
<dbReference type="Reactome" id="R-HSA-1251985">
    <property type="pathway name" value="Nuclear signaling by ERBB4"/>
</dbReference>
<dbReference type="Reactome" id="R-HSA-193692">
    <property type="pathway name" value="Regulated proteolysis of p75NTR"/>
</dbReference>
<dbReference type="Reactome" id="R-HSA-205043">
    <property type="pathway name" value="NRIF signals cell death from the nucleus"/>
</dbReference>
<dbReference type="Reactome" id="R-HSA-2122948">
    <property type="pathway name" value="Activated NOTCH1 Transmits Signal to the Nucleus"/>
</dbReference>
<dbReference type="Reactome" id="R-HSA-2644606">
    <property type="pathway name" value="Constitutive Signaling by NOTCH1 PEST Domain Mutants"/>
</dbReference>
<dbReference type="Reactome" id="R-HSA-2894862">
    <property type="pathway name" value="Constitutive Signaling by NOTCH1 HD+PEST Domain Mutants"/>
</dbReference>
<dbReference type="Reactome" id="R-HSA-2979096">
    <property type="pathway name" value="NOTCH2 Activation and Transmission of Signal to the Nucleus"/>
</dbReference>
<dbReference type="Reactome" id="R-HSA-3928665">
    <property type="pathway name" value="EPH-ephrin mediated repulsion of cells"/>
</dbReference>
<dbReference type="Reactome" id="R-HSA-9013507">
    <property type="pathway name" value="NOTCH3 Activation and Transmission of Signal to the Nucleus"/>
</dbReference>
<dbReference type="Reactome" id="R-HSA-9013700">
    <property type="pathway name" value="NOTCH4 Activation and Transmission of Signal to the Nucleus"/>
</dbReference>
<dbReference type="Reactome" id="R-HSA-9017802">
    <property type="pathway name" value="Noncanonical activation of NOTCH3"/>
</dbReference>
<dbReference type="Reactome" id="R-HSA-977225">
    <property type="pathway name" value="Amyloid fiber formation"/>
</dbReference>
<dbReference type="Reactome" id="R-HSA-9839383">
    <property type="pathway name" value="TGFBR3 PTM regulation"/>
</dbReference>
<dbReference type="SignaLink" id="Q8WW43"/>
<dbReference type="SIGNOR" id="Q8WW43"/>
<dbReference type="BioGRID-ORCS" id="83464">
    <property type="hits" value="9 hits in 1152 CRISPR screens"/>
</dbReference>
<dbReference type="ChiTaRS" id="APH1B">
    <property type="organism name" value="human"/>
</dbReference>
<dbReference type="GenomeRNAi" id="83464"/>
<dbReference type="Pharos" id="Q8WW43">
    <property type="development level" value="Tbio"/>
</dbReference>
<dbReference type="PRO" id="PR:Q8WW43"/>
<dbReference type="Proteomes" id="UP000005640">
    <property type="component" value="Chromosome 15"/>
</dbReference>
<dbReference type="RNAct" id="Q8WW43">
    <property type="molecule type" value="protein"/>
</dbReference>
<dbReference type="Bgee" id="ENSG00000138613">
    <property type="expression patterns" value="Expressed in left testis and 172 other cell types or tissues"/>
</dbReference>
<dbReference type="ExpressionAtlas" id="Q8WW43">
    <property type="expression patterns" value="baseline and differential"/>
</dbReference>
<dbReference type="GO" id="GO:0005783">
    <property type="term" value="C:endoplasmic reticulum"/>
    <property type="evidence" value="ECO:0000318"/>
    <property type="project" value="GO_Central"/>
</dbReference>
<dbReference type="GO" id="GO:0005789">
    <property type="term" value="C:endoplasmic reticulum membrane"/>
    <property type="evidence" value="ECO:0000303"/>
    <property type="project" value="ComplexPortal"/>
</dbReference>
<dbReference type="GO" id="GO:0010008">
    <property type="term" value="C:endosome membrane"/>
    <property type="evidence" value="ECO:0000304"/>
    <property type="project" value="Reactome"/>
</dbReference>
<dbReference type="GO" id="GO:0070765">
    <property type="term" value="C:gamma-secretase complex"/>
    <property type="evidence" value="ECO:0000314"/>
    <property type="project" value="ARUK-UCL"/>
</dbReference>
<dbReference type="GO" id="GO:0000139">
    <property type="term" value="C:Golgi membrane"/>
    <property type="evidence" value="ECO:0000303"/>
    <property type="project" value="ComplexPortal"/>
</dbReference>
<dbReference type="GO" id="GO:0016020">
    <property type="term" value="C:membrane"/>
    <property type="evidence" value="ECO:0000314"/>
    <property type="project" value="MGI"/>
</dbReference>
<dbReference type="GO" id="GO:0005886">
    <property type="term" value="C:plasma membrane"/>
    <property type="evidence" value="ECO:0000250"/>
    <property type="project" value="ComplexPortal"/>
</dbReference>
<dbReference type="GO" id="GO:0030133">
    <property type="term" value="C:transport vesicle"/>
    <property type="evidence" value="ECO:0000314"/>
    <property type="project" value="LIFEdb"/>
</dbReference>
<dbReference type="GO" id="GO:0061133">
    <property type="term" value="F:endopeptidase activator activity"/>
    <property type="evidence" value="ECO:0000315"/>
    <property type="project" value="ARUK-UCL"/>
</dbReference>
<dbReference type="GO" id="GO:0030674">
    <property type="term" value="F:protein-macromolecule adaptor activity"/>
    <property type="evidence" value="ECO:0000315"/>
    <property type="project" value="ARUK-UCL"/>
</dbReference>
<dbReference type="GO" id="GO:0042987">
    <property type="term" value="P:amyloid precursor protein catabolic process"/>
    <property type="evidence" value="ECO:0000314"/>
    <property type="project" value="ARUK-UCL"/>
</dbReference>
<dbReference type="GO" id="GO:0034205">
    <property type="term" value="P:amyloid-beta formation"/>
    <property type="evidence" value="ECO:0000314"/>
    <property type="project" value="ARUK-UCL"/>
</dbReference>
<dbReference type="GO" id="GO:0031293">
    <property type="term" value="P:membrane protein intracellular domain proteolysis"/>
    <property type="evidence" value="ECO:0000250"/>
    <property type="project" value="ComplexPortal"/>
</dbReference>
<dbReference type="GO" id="GO:0007220">
    <property type="term" value="P:Notch receptor processing"/>
    <property type="evidence" value="ECO:0000314"/>
    <property type="project" value="ARUK-UCL"/>
</dbReference>
<dbReference type="GO" id="GO:0007219">
    <property type="term" value="P:Notch signaling pathway"/>
    <property type="evidence" value="ECO:0000318"/>
    <property type="project" value="GO_Central"/>
</dbReference>
<dbReference type="GO" id="GO:0016485">
    <property type="term" value="P:protein processing"/>
    <property type="evidence" value="ECO:0000314"/>
    <property type="project" value="MGI"/>
</dbReference>
<dbReference type="InterPro" id="IPR009294">
    <property type="entry name" value="Aph-1"/>
</dbReference>
<dbReference type="PANTHER" id="PTHR12889">
    <property type="entry name" value="GAMMA-SECRETASE SUBUNIT APH-1"/>
    <property type="match status" value="1"/>
</dbReference>
<dbReference type="Pfam" id="PF06105">
    <property type="entry name" value="Aph-1"/>
    <property type="match status" value="1"/>
</dbReference>
<sequence length="257" mass="28460">MTAAVFFGCAFIAFGPALALYVFTIATEPLRIIFLIAGAFFWLVSLLISSLVWFMARVIIDNKDGPTQKYLLIFGAFVSVYIQEMFRFAYYKLLKKASEGLKSINPGETAPSMRLLAYVSGLGFGIMSGVFSFVNTLSDSLGPGTVGIHGDSPQFFLYSAFMTLVIILLHVFWGIVFFDGCEKKKWGILLIVLLTHLLVSAQTFISSYYGINLASAFIILVLMGTWAFLAAGGSCRSLKLCLLCQDKNFLLYNQRSR</sequence>
<reference key="1">
    <citation type="submission" date="2002-05" db="EMBL/GenBank/DDBJ databases">
        <title>PSF is essential for gamma-secretase activity and stabilization of presenilin and nicastrin.</title>
        <authorList>
            <person name="Lee H.-J."/>
            <person name="Kim T.-W."/>
        </authorList>
    </citation>
    <scope>NUCLEOTIDE SEQUENCE [MRNA] (ISOFORM 1)</scope>
</reference>
<reference key="2">
    <citation type="journal article" date="2005" name="Biochem. Biophys. Res. Commun.">
        <title>Identification and characterization of a novel human APH-1b splice variant lacking exon 4.</title>
        <authorList>
            <person name="Saito S."/>
            <person name="Takahashi-Sasaki N."/>
            <person name="Araki W."/>
        </authorList>
    </citation>
    <scope>NUCLEOTIDE SEQUENCE [MRNA] (ISOFORM 2)</scope>
    <scope>ALTERNATIVE SPLICING</scope>
</reference>
<reference key="3">
    <citation type="journal article" date="2001" name="Genome Res.">
        <title>Towards a catalog of human genes and proteins: sequencing and analysis of 500 novel complete protein coding human cDNAs.</title>
        <authorList>
            <person name="Wiemann S."/>
            <person name="Weil B."/>
            <person name="Wellenreuther R."/>
            <person name="Gassenhuber J."/>
            <person name="Glassl S."/>
            <person name="Ansorge W."/>
            <person name="Boecher M."/>
            <person name="Bloecker H."/>
            <person name="Bauersachs S."/>
            <person name="Blum H."/>
            <person name="Lauber J."/>
            <person name="Duesterhoeft A."/>
            <person name="Beyer A."/>
            <person name="Koehrer K."/>
            <person name="Strack N."/>
            <person name="Mewes H.-W."/>
            <person name="Ottenwaelder B."/>
            <person name="Obermaier B."/>
            <person name="Tampe J."/>
            <person name="Heubner D."/>
            <person name="Wambutt R."/>
            <person name="Korn B."/>
            <person name="Klein M."/>
            <person name="Poustka A."/>
        </authorList>
    </citation>
    <scope>NUCLEOTIDE SEQUENCE [LARGE SCALE MRNA] (ISOFORM 1)</scope>
    <source>
        <tissue>Brain</tissue>
    </source>
</reference>
<reference key="4">
    <citation type="journal article" date="2003" name="Genome Res.">
        <title>The secreted protein discovery initiative (SPDI), a large-scale effort to identify novel human secreted and transmembrane proteins: a bioinformatics assessment.</title>
        <authorList>
            <person name="Clark H.F."/>
            <person name="Gurney A.L."/>
            <person name="Abaya E."/>
            <person name="Baker K."/>
            <person name="Baldwin D.T."/>
            <person name="Brush J."/>
            <person name="Chen J."/>
            <person name="Chow B."/>
            <person name="Chui C."/>
            <person name="Crowley C."/>
            <person name="Currell B."/>
            <person name="Deuel B."/>
            <person name="Dowd P."/>
            <person name="Eaton D."/>
            <person name="Foster J.S."/>
            <person name="Grimaldi C."/>
            <person name="Gu Q."/>
            <person name="Hass P.E."/>
            <person name="Heldens S."/>
            <person name="Huang A."/>
            <person name="Kim H.S."/>
            <person name="Klimowski L."/>
            <person name="Jin Y."/>
            <person name="Johnson S."/>
            <person name="Lee J."/>
            <person name="Lewis L."/>
            <person name="Liao D."/>
            <person name="Mark M.R."/>
            <person name="Robbie E."/>
            <person name="Sanchez C."/>
            <person name="Schoenfeld J."/>
            <person name="Seshagiri S."/>
            <person name="Simmons L."/>
            <person name="Singh J."/>
            <person name="Smith V."/>
            <person name="Stinson J."/>
            <person name="Vagts A."/>
            <person name="Vandlen R.L."/>
            <person name="Watanabe C."/>
            <person name="Wieand D."/>
            <person name="Woods K."/>
            <person name="Xie M.-H."/>
            <person name="Yansura D.G."/>
            <person name="Yi S."/>
            <person name="Yu G."/>
            <person name="Yuan J."/>
            <person name="Zhang M."/>
            <person name="Zhang Z."/>
            <person name="Goddard A.D."/>
            <person name="Wood W.I."/>
            <person name="Godowski P.J."/>
            <person name="Gray A.M."/>
        </authorList>
    </citation>
    <scope>NUCLEOTIDE SEQUENCE [LARGE SCALE MRNA] (ISOFORM 1)</scope>
</reference>
<reference key="5">
    <citation type="journal article" date="2004" name="Nat. Genet.">
        <title>Complete sequencing and characterization of 21,243 full-length human cDNAs.</title>
        <authorList>
            <person name="Ota T."/>
            <person name="Suzuki Y."/>
            <person name="Nishikawa T."/>
            <person name="Otsuki T."/>
            <person name="Sugiyama T."/>
            <person name="Irie R."/>
            <person name="Wakamatsu A."/>
            <person name="Hayashi K."/>
            <person name="Sato H."/>
            <person name="Nagai K."/>
            <person name="Kimura K."/>
            <person name="Makita H."/>
            <person name="Sekine M."/>
            <person name="Obayashi M."/>
            <person name="Nishi T."/>
            <person name="Shibahara T."/>
            <person name="Tanaka T."/>
            <person name="Ishii S."/>
            <person name="Yamamoto J."/>
            <person name="Saito K."/>
            <person name="Kawai Y."/>
            <person name="Isono Y."/>
            <person name="Nakamura Y."/>
            <person name="Nagahari K."/>
            <person name="Murakami K."/>
            <person name="Yasuda T."/>
            <person name="Iwayanagi T."/>
            <person name="Wagatsuma M."/>
            <person name="Shiratori A."/>
            <person name="Sudo H."/>
            <person name="Hosoiri T."/>
            <person name="Kaku Y."/>
            <person name="Kodaira H."/>
            <person name="Kondo H."/>
            <person name="Sugawara M."/>
            <person name="Takahashi M."/>
            <person name="Kanda K."/>
            <person name="Yokoi T."/>
            <person name="Furuya T."/>
            <person name="Kikkawa E."/>
            <person name="Omura Y."/>
            <person name="Abe K."/>
            <person name="Kamihara K."/>
            <person name="Katsuta N."/>
            <person name="Sato K."/>
            <person name="Tanikawa M."/>
            <person name="Yamazaki M."/>
            <person name="Ninomiya K."/>
            <person name="Ishibashi T."/>
            <person name="Yamashita H."/>
            <person name="Murakawa K."/>
            <person name="Fujimori K."/>
            <person name="Tanai H."/>
            <person name="Kimata M."/>
            <person name="Watanabe M."/>
            <person name="Hiraoka S."/>
            <person name="Chiba Y."/>
            <person name="Ishida S."/>
            <person name="Ono Y."/>
            <person name="Takiguchi S."/>
            <person name="Watanabe S."/>
            <person name="Yosida M."/>
            <person name="Hotuta T."/>
            <person name="Kusano J."/>
            <person name="Kanehori K."/>
            <person name="Takahashi-Fujii A."/>
            <person name="Hara H."/>
            <person name="Tanase T.-O."/>
            <person name="Nomura Y."/>
            <person name="Togiya S."/>
            <person name="Komai F."/>
            <person name="Hara R."/>
            <person name="Takeuchi K."/>
            <person name="Arita M."/>
            <person name="Imose N."/>
            <person name="Musashino K."/>
            <person name="Yuuki H."/>
            <person name="Oshima A."/>
            <person name="Sasaki N."/>
            <person name="Aotsuka S."/>
            <person name="Yoshikawa Y."/>
            <person name="Matsunawa H."/>
            <person name="Ichihara T."/>
            <person name="Shiohata N."/>
            <person name="Sano S."/>
            <person name="Moriya S."/>
            <person name="Momiyama H."/>
            <person name="Satoh N."/>
            <person name="Takami S."/>
            <person name="Terashima Y."/>
            <person name="Suzuki O."/>
            <person name="Nakagawa S."/>
            <person name="Senoh A."/>
            <person name="Mizoguchi H."/>
            <person name="Goto Y."/>
            <person name="Shimizu F."/>
            <person name="Wakebe H."/>
            <person name="Hishigaki H."/>
            <person name="Watanabe T."/>
            <person name="Sugiyama A."/>
            <person name="Takemoto M."/>
            <person name="Kawakami B."/>
            <person name="Yamazaki M."/>
            <person name="Watanabe K."/>
            <person name="Kumagai A."/>
            <person name="Itakura S."/>
            <person name="Fukuzumi Y."/>
            <person name="Fujimori Y."/>
            <person name="Komiyama M."/>
            <person name="Tashiro H."/>
            <person name="Tanigami A."/>
            <person name="Fujiwara T."/>
            <person name="Ono T."/>
            <person name="Yamada K."/>
            <person name="Fujii Y."/>
            <person name="Ozaki K."/>
            <person name="Hirao M."/>
            <person name="Ohmori Y."/>
            <person name="Kawabata A."/>
            <person name="Hikiji T."/>
            <person name="Kobatake N."/>
            <person name="Inagaki H."/>
            <person name="Ikema Y."/>
            <person name="Okamoto S."/>
            <person name="Okitani R."/>
            <person name="Kawakami T."/>
            <person name="Noguchi S."/>
            <person name="Itoh T."/>
            <person name="Shigeta K."/>
            <person name="Senba T."/>
            <person name="Matsumura K."/>
            <person name="Nakajima Y."/>
            <person name="Mizuno T."/>
            <person name="Morinaga M."/>
            <person name="Sasaki M."/>
            <person name="Togashi T."/>
            <person name="Oyama M."/>
            <person name="Hata H."/>
            <person name="Watanabe M."/>
            <person name="Komatsu T."/>
            <person name="Mizushima-Sugano J."/>
            <person name="Satoh T."/>
            <person name="Shirai Y."/>
            <person name="Takahashi Y."/>
            <person name="Nakagawa K."/>
            <person name="Okumura K."/>
            <person name="Nagase T."/>
            <person name="Nomura N."/>
            <person name="Kikuchi H."/>
            <person name="Masuho Y."/>
            <person name="Yamashita R."/>
            <person name="Nakai K."/>
            <person name="Yada T."/>
            <person name="Nakamura Y."/>
            <person name="Ohara O."/>
            <person name="Isogai T."/>
            <person name="Sugano S."/>
        </authorList>
    </citation>
    <scope>NUCLEOTIDE SEQUENCE [LARGE SCALE MRNA] (ISOFORM 1)</scope>
</reference>
<reference key="6">
    <citation type="journal article" date="2006" name="Nature">
        <title>Analysis of the DNA sequence and duplication history of human chromosome 15.</title>
        <authorList>
            <person name="Zody M.C."/>
            <person name="Garber M."/>
            <person name="Sharpe T."/>
            <person name="Young S.K."/>
            <person name="Rowen L."/>
            <person name="O'Neill K."/>
            <person name="Whittaker C.A."/>
            <person name="Kamal M."/>
            <person name="Chang J.L."/>
            <person name="Cuomo C.A."/>
            <person name="Dewar K."/>
            <person name="FitzGerald M.G."/>
            <person name="Kodira C.D."/>
            <person name="Madan A."/>
            <person name="Qin S."/>
            <person name="Yang X."/>
            <person name="Abbasi N."/>
            <person name="Abouelleil A."/>
            <person name="Arachchi H.M."/>
            <person name="Baradarani L."/>
            <person name="Birditt B."/>
            <person name="Bloom S."/>
            <person name="Bloom T."/>
            <person name="Borowsky M.L."/>
            <person name="Burke J."/>
            <person name="Butler J."/>
            <person name="Cook A."/>
            <person name="DeArellano K."/>
            <person name="DeCaprio D."/>
            <person name="Dorris L. III"/>
            <person name="Dors M."/>
            <person name="Eichler E.E."/>
            <person name="Engels R."/>
            <person name="Fahey J."/>
            <person name="Fleetwood P."/>
            <person name="Friedman C."/>
            <person name="Gearin G."/>
            <person name="Hall J.L."/>
            <person name="Hensley G."/>
            <person name="Johnson E."/>
            <person name="Jones C."/>
            <person name="Kamat A."/>
            <person name="Kaur A."/>
            <person name="Locke D.P."/>
            <person name="Madan A."/>
            <person name="Munson G."/>
            <person name="Jaffe D.B."/>
            <person name="Lui A."/>
            <person name="Macdonald P."/>
            <person name="Mauceli E."/>
            <person name="Naylor J.W."/>
            <person name="Nesbitt R."/>
            <person name="Nicol R."/>
            <person name="O'Leary S.B."/>
            <person name="Ratcliffe A."/>
            <person name="Rounsley S."/>
            <person name="She X."/>
            <person name="Sneddon K.M.B."/>
            <person name="Stewart S."/>
            <person name="Sougnez C."/>
            <person name="Stone S.M."/>
            <person name="Topham K."/>
            <person name="Vincent D."/>
            <person name="Wang S."/>
            <person name="Zimmer A.R."/>
            <person name="Birren B.W."/>
            <person name="Hood L."/>
            <person name="Lander E.S."/>
            <person name="Nusbaum C."/>
        </authorList>
    </citation>
    <scope>NUCLEOTIDE SEQUENCE [LARGE SCALE GENOMIC DNA]</scope>
</reference>
<reference key="7">
    <citation type="submission" date="2005-07" db="EMBL/GenBank/DDBJ databases">
        <authorList>
            <person name="Mural R.J."/>
            <person name="Istrail S."/>
            <person name="Sutton G.G."/>
            <person name="Florea L."/>
            <person name="Halpern A.L."/>
            <person name="Mobarry C.M."/>
            <person name="Lippert R."/>
            <person name="Walenz B."/>
            <person name="Shatkay H."/>
            <person name="Dew I."/>
            <person name="Miller J.R."/>
            <person name="Flanigan M.J."/>
            <person name="Edwards N.J."/>
            <person name="Bolanos R."/>
            <person name="Fasulo D."/>
            <person name="Halldorsson B.V."/>
            <person name="Hannenhalli S."/>
            <person name="Turner R."/>
            <person name="Yooseph S."/>
            <person name="Lu F."/>
            <person name="Nusskern D.R."/>
            <person name="Shue B.C."/>
            <person name="Zheng X.H."/>
            <person name="Zhong F."/>
            <person name="Delcher A.L."/>
            <person name="Huson D.H."/>
            <person name="Kravitz S.A."/>
            <person name="Mouchard L."/>
            <person name="Reinert K."/>
            <person name="Remington K.A."/>
            <person name="Clark A.G."/>
            <person name="Waterman M.S."/>
            <person name="Eichler E.E."/>
            <person name="Adams M.D."/>
            <person name="Hunkapiller M.W."/>
            <person name="Myers E.W."/>
            <person name="Venter J.C."/>
        </authorList>
    </citation>
    <scope>NUCLEOTIDE SEQUENCE [LARGE SCALE GENOMIC DNA]</scope>
</reference>
<reference key="8">
    <citation type="journal article" date="2004" name="Genome Res.">
        <title>The status, quality, and expansion of the NIH full-length cDNA project: the Mammalian Gene Collection (MGC).</title>
        <authorList>
            <consortium name="The MGC Project Team"/>
        </authorList>
    </citation>
    <scope>NUCLEOTIDE SEQUENCE [LARGE SCALE MRNA] (ISOFORM 1)</scope>
    <source>
        <tissue>Placenta</tissue>
    </source>
</reference>
<reference key="9">
    <citation type="journal article" date="2002" name="J. Biol. Chem.">
        <title>Mammalian APH-1 interacts with presenilin and nicastrin and is required for intramembrane proteolysis of amyloid-beta precursor protein and Notch.</title>
        <authorList>
            <person name="Lee S.-F."/>
            <person name="Shah S."/>
            <person name="Li H."/>
            <person name="Yu C."/>
            <person name="Han W."/>
            <person name="Yu G."/>
        </authorList>
    </citation>
    <scope>FUNCTION</scope>
    <scope>INTERACTION WITH PSEN1 AND PSEN2</scope>
    <source>
        <tissue>Glioblastoma</tissue>
    </source>
</reference>
<reference key="10">
    <citation type="journal article" date="2003" name="Proc. Natl. Acad. Sci. U.S.A.">
        <title>Gamma-secretase is a membrane protein complex comprised of presenilin, nicastrin, Aph-1, and Pen-2.</title>
        <authorList>
            <person name="Kimberly W.T."/>
            <person name="LaVoie M.J."/>
            <person name="Ostaszewski B.L."/>
            <person name="Ye W."/>
            <person name="Wolfe M.S."/>
            <person name="Selkoe D.J."/>
        </authorList>
    </citation>
    <scope>TISSUE SPECIFICITY</scope>
</reference>
<comment type="function">
    <text evidence="3">Probable subunit of the gamma-secretase complex, an endoprotease complex that catalyzes the intramembrane cleavage of integral proteins such as Notch receptors and APP (amyloid-beta precursor protein). It probably represents a stabilizing cofactor for the presenilin homodimer that promotes the formation of a stable complex. Probably present in a minority of gamma-secretase complexes compared to APH1A.</text>
</comment>
<comment type="subunit">
    <text evidence="1 3">Probable component of the gamma-secretase complex, a complex composed of a presenilin homodimer (PSEN1 or PSEN2), nicastrin (NCSTN), APH1 (APH1A or APH1B) and PEN2. Such minimal complex is sufficient for secretase activity, although other components may exist (By similarity). Interacts with PSEN1 and PSEN2.</text>
</comment>
<comment type="interaction">
    <interactant intactId="EBI-2606497">
        <id>Q8WW43</id>
    </interactant>
    <interactant intactId="EBI-77613">
        <id>P05067</id>
        <label>APP</label>
    </interactant>
    <organismsDiffer>false</organismsDiffer>
    <experiments>3</experiments>
</comment>
<comment type="interaction">
    <interactant intactId="EBI-2606497">
        <id>Q8WW43</id>
    </interactant>
    <interactant intactId="EBI-12275524">
        <id>P23560-2</id>
        <label>BDNF</label>
    </interactant>
    <organismsDiffer>false</organismsDiffer>
    <experiments>3</experiments>
</comment>
<comment type="interaction">
    <interactant intactId="EBI-2606497">
        <id>Q8WW43</id>
    </interactant>
    <interactant intactId="EBI-8650934">
        <id>P48230</id>
        <label>TM4SF4</label>
    </interactant>
    <organismsDiffer>false</organismsDiffer>
    <experiments>3</experiments>
</comment>
<comment type="interaction">
    <interactant intactId="EBI-2606497">
        <id>Q8WW43</id>
    </interactant>
    <interactant intactId="EBI-11988865">
        <id>A5PKU2</id>
        <label>TUSC5</label>
    </interactant>
    <organismsDiffer>false</organismsDiffer>
    <experiments>3</experiments>
</comment>
<comment type="interaction">
    <interactant intactId="EBI-2606497">
        <id>Q8WW43</id>
    </interactant>
    <interactant intactId="EBI-12190699">
        <id>Q6UX27-3</id>
        <label>VSTM1</label>
    </interactant>
    <organismsDiffer>false</organismsDiffer>
    <experiments>3</experiments>
</comment>
<comment type="subcellular location">
    <subcellularLocation>
        <location evidence="6">Membrane</location>
        <topology evidence="6">Multi-pass membrane protein</topology>
    </subcellularLocation>
</comment>
<comment type="alternative products">
    <event type="alternative splicing"/>
    <isoform>
        <id>Q8WW43-1</id>
        <name>1</name>
        <sequence type="displayed"/>
    </isoform>
    <isoform>
        <id>Q8WW43-2</id>
        <name>2</name>
        <sequence type="described" ref="VSP_042945"/>
    </isoform>
</comment>
<comment type="tissue specificity">
    <text evidence="4">Weakly or not expressed in leukocytes, lung, placenta, small intestine, liver, kidney, spleen thymus, colon, skeletal muscle, heart and brain.</text>
</comment>
<comment type="miscellaneous">
    <molecule>Isoform 2</molecule>
    <text evidence="6">Expressed at low levels in most tissues.</text>
</comment>
<comment type="similarity">
    <text evidence="6">Belongs to the APH-1 family.</text>
</comment>
<keyword id="KW-0002">3D-structure</keyword>
<keyword id="KW-0025">Alternative splicing</keyword>
<keyword id="KW-0472">Membrane</keyword>
<keyword id="KW-0914">Notch signaling pathway</keyword>
<keyword id="KW-1267">Proteomics identification</keyword>
<keyword id="KW-1185">Reference proteome</keyword>
<keyword id="KW-0812">Transmembrane</keyword>
<keyword id="KW-1133">Transmembrane helix</keyword>
<proteinExistence type="evidence at protein level"/>
<gene>
    <name type="primary">APH1B</name>
    <name type="synonym">PSFL</name>
    <name type="ORF">UNQ688/PRO1328</name>
</gene>
<name>APH1B_HUMAN</name>